<name>SFMM3_STRLA</name>
<proteinExistence type="inferred from homology"/>
<accession>B0CN39</accession>
<evidence type="ECO:0000255" key="1">
    <source>
        <dbReference type="PROSITE-ProRule" id="PRU01020"/>
    </source>
</evidence>
<evidence type="ECO:0000269" key="2">
    <source>
    </source>
</evidence>
<evidence type="ECO:0000303" key="3">
    <source>
    </source>
</evidence>
<evidence type="ECO:0000305" key="4"/>
<evidence type="ECO:0000305" key="5">
    <source>
    </source>
</evidence>
<evidence type="ECO:0000312" key="6">
    <source>
        <dbReference type="EMBL" id="ABI22145.1"/>
    </source>
</evidence>
<organism evidence="6">
    <name type="scientific">Streptomyces lavendulae</name>
    <dbReference type="NCBI Taxonomy" id="1914"/>
    <lineage>
        <taxon>Bacteria</taxon>
        <taxon>Bacillati</taxon>
        <taxon>Actinomycetota</taxon>
        <taxon>Actinomycetes</taxon>
        <taxon>Kitasatosporales</taxon>
        <taxon>Streptomycetaceae</taxon>
        <taxon>Streptomyces</taxon>
    </lineage>
</organism>
<comment type="function">
    <text evidence="5">O-methyltransferase that mediates the methylation of 3-hydroxy-5-methyl-L-tyrosine (3-OH-5-Me-Tyr) into 3-hydroxy-5-methyl-O-methyltyrosine (3-OH-5-Me-OMe-Tyr), a core structure of saframycin A, a potent antitumor antibiotic that belongs to the tetrahydroisoquinoline family.</text>
</comment>
<comment type="catalytic activity">
    <reaction evidence="5">
        <text>5-hydroxy-3-methyl-L-tyrosine + S-adenosyl-L-methionine = 5-hydroxy-3-methyl-O-methyl-L-tyrosine + S-adenosyl-L-homocysteine + H(+)</text>
        <dbReference type="Rhea" id="RHEA:47752"/>
        <dbReference type="ChEBI" id="CHEBI:15378"/>
        <dbReference type="ChEBI" id="CHEBI:57856"/>
        <dbReference type="ChEBI" id="CHEBI:59789"/>
        <dbReference type="ChEBI" id="CHEBI:78241"/>
        <dbReference type="ChEBI" id="CHEBI:87846"/>
    </reaction>
</comment>
<comment type="pathway">
    <text evidence="2">Antibiotic biosynthesis.</text>
</comment>
<comment type="similarity">
    <text evidence="1">Belongs to the class I-like SAM-binding methyltransferase superfamily. Cation-independent O-methyltransferase family. COMT subfamily.</text>
</comment>
<protein>
    <recommendedName>
        <fullName evidence="4">O-methyltransferase SfmM3</fullName>
        <ecNumber evidence="4">2.1.1.-</ecNumber>
    </recommendedName>
</protein>
<dbReference type="EC" id="2.1.1.-" evidence="4"/>
<dbReference type="EMBL" id="DQ838002">
    <property type="protein sequence ID" value="ABI22145.1"/>
    <property type="molecule type" value="Genomic_DNA"/>
</dbReference>
<dbReference type="SMR" id="B0CN39"/>
<dbReference type="BioCyc" id="MetaCyc:MONOMER-19338"/>
<dbReference type="GO" id="GO:0008171">
    <property type="term" value="F:O-methyltransferase activity"/>
    <property type="evidence" value="ECO:0007669"/>
    <property type="project" value="InterPro"/>
</dbReference>
<dbReference type="GO" id="GO:0046983">
    <property type="term" value="F:protein dimerization activity"/>
    <property type="evidence" value="ECO:0007669"/>
    <property type="project" value="InterPro"/>
</dbReference>
<dbReference type="GO" id="GO:0017000">
    <property type="term" value="P:antibiotic biosynthetic process"/>
    <property type="evidence" value="ECO:0007669"/>
    <property type="project" value="UniProtKB-KW"/>
</dbReference>
<dbReference type="GO" id="GO:0032259">
    <property type="term" value="P:methylation"/>
    <property type="evidence" value="ECO:0007669"/>
    <property type="project" value="UniProtKB-KW"/>
</dbReference>
<dbReference type="Gene3D" id="1.10.287.1350">
    <property type="match status" value="1"/>
</dbReference>
<dbReference type="Gene3D" id="3.40.50.150">
    <property type="entry name" value="Vaccinia Virus protein VP39"/>
    <property type="match status" value="1"/>
</dbReference>
<dbReference type="Gene3D" id="1.10.10.10">
    <property type="entry name" value="Winged helix-like DNA-binding domain superfamily/Winged helix DNA-binding domain"/>
    <property type="match status" value="1"/>
</dbReference>
<dbReference type="InterPro" id="IPR016461">
    <property type="entry name" value="COMT-like"/>
</dbReference>
<dbReference type="InterPro" id="IPR001077">
    <property type="entry name" value="O_MeTrfase_dom"/>
</dbReference>
<dbReference type="InterPro" id="IPR012967">
    <property type="entry name" value="Plant_O-MeTrfase_dimerisation"/>
</dbReference>
<dbReference type="InterPro" id="IPR029063">
    <property type="entry name" value="SAM-dependent_MTases_sf"/>
</dbReference>
<dbReference type="InterPro" id="IPR036388">
    <property type="entry name" value="WH-like_DNA-bd_sf"/>
</dbReference>
<dbReference type="InterPro" id="IPR036390">
    <property type="entry name" value="WH_DNA-bd_sf"/>
</dbReference>
<dbReference type="PANTHER" id="PTHR43712:SF2">
    <property type="entry name" value="O-METHYLTRANSFERASE CICE"/>
    <property type="match status" value="1"/>
</dbReference>
<dbReference type="PANTHER" id="PTHR43712">
    <property type="entry name" value="PUTATIVE (AFU_ORTHOLOGUE AFUA_4G14580)-RELATED"/>
    <property type="match status" value="1"/>
</dbReference>
<dbReference type="Pfam" id="PF08100">
    <property type="entry name" value="Dimerisation"/>
    <property type="match status" value="1"/>
</dbReference>
<dbReference type="Pfam" id="PF00891">
    <property type="entry name" value="Methyltransf_2"/>
    <property type="match status" value="1"/>
</dbReference>
<dbReference type="PIRSF" id="PIRSF005739">
    <property type="entry name" value="O-mtase"/>
    <property type="match status" value="1"/>
</dbReference>
<dbReference type="SUPFAM" id="SSF53335">
    <property type="entry name" value="S-adenosyl-L-methionine-dependent methyltransferases"/>
    <property type="match status" value="1"/>
</dbReference>
<dbReference type="SUPFAM" id="SSF46785">
    <property type="entry name" value="Winged helix' DNA-binding domain"/>
    <property type="match status" value="1"/>
</dbReference>
<dbReference type="PROSITE" id="PS51683">
    <property type="entry name" value="SAM_OMT_II"/>
    <property type="match status" value="1"/>
</dbReference>
<sequence>MRRMLYAQLPSRALVVVAQLGIADILAEGPADISTLAERTSTDAVALARLLRGLAVFGVFEEGAEQVYSLTPLGEALTSGHPASALPSATLVAGQFGAAWGDLLETVRTGQSPFERSRGVSLFTHMEQDEELRAVFDDSQGRGLALELDEILRAIDFSAYPTVVDVGGSDGTFLRRILSAHPDISGIVFDLPGSTSLQAERPTADPLEGRYSVATGDFFDSLPEGGDLYLLSHILHDWDDDRAVQILRTCRAAMSDDATLMVVDLIAANRGQRDERLHTAALMDLYMLSLFGGNGGQERTAAQVEVLLSKAGFRITRVDSLPSGMNVIRAVRAA</sequence>
<keyword id="KW-0045">Antibiotic biosynthesis</keyword>
<keyword id="KW-0489">Methyltransferase</keyword>
<keyword id="KW-0949">S-adenosyl-L-methionine</keyword>
<keyword id="KW-0808">Transferase</keyword>
<reference key="1">
    <citation type="journal article" date="2008" name="J. Bacteriol.">
        <title>Characterization of the saframycin A gene cluster from Streptomyces lavendulae NRRL 11002 revealing a nonribosomal peptide synthetase system for assembling the unusual tetrapeptidyl skeleton in an iterative manner.</title>
        <authorList>
            <person name="Li L."/>
            <person name="Deng W."/>
            <person name="Song J."/>
            <person name="Ding W."/>
            <person name="Zhao Q.F."/>
            <person name="Peng C."/>
            <person name="Song W.W."/>
            <person name="Tang G.L."/>
            <person name="Liu W."/>
        </authorList>
    </citation>
    <scope>NUCLEOTIDE SEQUENCE [GENOMIC DNA]</scope>
    <source>
        <strain evidence="6">NRRL 11002</strain>
    </source>
</reference>
<reference key="2">
    <citation type="journal article" date="2009" name="J. Microbiol. Biotechnol.">
        <title>Biosynthesis of 3-hydroxy-5-methyl-o-methyltyrosine in the saframycin/ safracin biosynthetic pathway.</title>
        <authorList>
            <person name="Fu C.Y."/>
            <person name="Tang M.C."/>
            <person name="Peng C."/>
            <person name="Li L."/>
            <person name="He Y.L."/>
            <person name="Liu W."/>
            <person name="Tang G.L."/>
        </authorList>
    </citation>
    <scope>PATHWAY</scope>
</reference>
<reference key="3">
    <citation type="journal article" date="2012" name="J. Biol. Chem.">
        <title>Characterization of SfmD as a heme peroxidase that catalyzes the regioselective hydroxylation of 3-methyltyrosine to 3-hydroxy-5-methyltyrosine in saframycin A biosynthesis.</title>
        <authorList>
            <person name="Tang M.C."/>
            <person name="Fu C.Y."/>
            <person name="Tang G.L."/>
        </authorList>
    </citation>
    <scope>IDENTIFICATION</scope>
</reference>
<feature type="chain" id="PRO_0000430697" description="O-methyltransferase SfmM3">
    <location>
        <begin position="1"/>
        <end position="334"/>
    </location>
</feature>
<feature type="active site" description="Proton acceptor" evidence="1">
    <location>
        <position position="236"/>
    </location>
</feature>
<feature type="binding site" evidence="1">
    <location>
        <position position="190"/>
    </location>
    <ligand>
        <name>S-adenosyl-L-methionine</name>
        <dbReference type="ChEBI" id="CHEBI:59789"/>
    </ligand>
</feature>
<feature type="binding site" evidence="1">
    <location>
        <begin position="216"/>
        <end position="218"/>
    </location>
    <ligand>
        <name>S-adenosyl-L-methionine</name>
        <dbReference type="ChEBI" id="CHEBI:59789"/>
    </ligand>
</feature>
<gene>
    <name evidence="3" type="primary">sfmM3</name>
</gene>